<organismHost>
    <name type="scientific">Orgyia pseudotsugata</name>
    <name type="common">Douglas-fir tussock moth</name>
    <dbReference type="NCBI Taxonomy" id="33414"/>
</organismHost>
<gene>
    <name type="primary">P10</name>
    <name type="ORF">ORF133</name>
</gene>
<sequence>MSKPSILTQILDAVRAVDSKVTALQTQVDQLVEDSKTLEALTDQLGELDNKVSDIQSMLSVEEELPEPPAPAPEPELPEIPDVPGLRRSRKQ</sequence>
<name>VP10_NPVOP</name>
<dbReference type="EMBL" id="M14883">
    <property type="protein sequence ID" value="AAA46725.1"/>
    <property type="molecule type" value="Genomic_DNA"/>
</dbReference>
<dbReference type="EMBL" id="U75930">
    <property type="protein sequence ID" value="AAC59132.1"/>
    <property type="molecule type" value="Genomic_DNA"/>
</dbReference>
<dbReference type="PIR" id="A24186">
    <property type="entry name" value="WMNVPM"/>
</dbReference>
<dbReference type="RefSeq" id="NP_046289.1">
    <property type="nucleotide sequence ID" value="NC_001875.2"/>
</dbReference>
<dbReference type="SMR" id="P08357"/>
<dbReference type="KEGG" id="vg:912089"/>
<dbReference type="OrthoDB" id="21496at10239"/>
<dbReference type="Proteomes" id="UP000009248">
    <property type="component" value="Genome"/>
</dbReference>
<dbReference type="GO" id="GO:0039679">
    <property type="term" value="C:viral occlusion body"/>
    <property type="evidence" value="ECO:0007669"/>
    <property type="project" value="UniProtKB-KW"/>
</dbReference>
<dbReference type="Gene3D" id="1.20.1270.70">
    <property type="entry name" value="Designed single chain three-helix bundle"/>
    <property type="match status" value="1"/>
</dbReference>
<dbReference type="InterPro" id="IPR008702">
    <property type="entry name" value="NPV_P10"/>
</dbReference>
<dbReference type="Pfam" id="PF05531">
    <property type="entry name" value="NPV_P10"/>
    <property type="match status" value="1"/>
</dbReference>
<comment type="function">
    <text>Seems to be involved in the morphogenesis of the polyhedra. Forms extensive fibrillar structures in both nucleus and cytoplasm. It is involved in the liberation of polyhedra from infected-insect cell.</text>
</comment>
<comment type="similarity">
    <text evidence="2">Belongs to the baculoviridae p10 family.</text>
</comment>
<evidence type="ECO:0000256" key="1">
    <source>
        <dbReference type="SAM" id="MobiDB-lite"/>
    </source>
</evidence>
<evidence type="ECO:0000305" key="2"/>
<reference key="1">
    <citation type="journal article" date="1986" name="Virology">
        <title>Nucleotide sequencing and transcriptional mapping of the Orgyia pseudotsugata multicapsid nuclear polyhedrosis virus p10 gene.</title>
        <authorList>
            <person name="Leisy D.J."/>
            <person name="Rohrmann G.F."/>
            <person name="Nesson M."/>
            <person name="Beaudreau G.S."/>
        </authorList>
    </citation>
    <scope>NUCLEOTIDE SEQUENCE [GENOMIC DNA]</scope>
</reference>
<reference key="2">
    <citation type="journal article" date="1997" name="Virology">
        <title>The sequence of the Orgyia pseudotsugata multinucleocapsid nuclear polyhedrosis virus genome.</title>
        <authorList>
            <person name="Ahrens C.H."/>
            <person name="Russell R.R."/>
            <person name="Funk C.J."/>
            <person name="Evans J."/>
            <person name="Harwood S."/>
            <person name="Rohrmann G.F."/>
        </authorList>
    </citation>
    <scope>NUCLEOTIDE SEQUENCE [LARGE SCALE GENOMIC DNA]</scope>
</reference>
<protein>
    <recommendedName>
        <fullName>Protein p10</fullName>
    </recommendedName>
    <alternativeName>
        <fullName>Fibrous body protein</fullName>
    </alternativeName>
</protein>
<keyword id="KW-0426">Late protein</keyword>
<keyword id="KW-1185">Reference proteome</keyword>
<keyword id="KW-0842">Viral occlusion body</keyword>
<feature type="chain" id="PRO_0000132880" description="Protein p10">
    <location>
        <begin position="1"/>
        <end position="92"/>
    </location>
</feature>
<feature type="region of interest" description="Disordered" evidence="1">
    <location>
        <begin position="60"/>
        <end position="92"/>
    </location>
</feature>
<proteinExistence type="inferred from homology"/>
<organism>
    <name type="scientific">Orgyia pseudotsugata multicapsid polyhedrosis virus</name>
    <name type="common">OpMNPV</name>
    <dbReference type="NCBI Taxonomy" id="262177"/>
    <lineage>
        <taxon>Viruses</taxon>
        <taxon>Viruses incertae sedis</taxon>
        <taxon>Naldaviricetes</taxon>
        <taxon>Lefavirales</taxon>
        <taxon>Baculoviridae</taxon>
        <taxon>Alphabaculovirus</taxon>
        <taxon>Alphabaculovirus orpseudotsugatae</taxon>
    </lineage>
</organism>
<accession>P08357</accession>